<organism>
    <name type="scientific">Brucella abortus (strain 2308)</name>
    <dbReference type="NCBI Taxonomy" id="359391"/>
    <lineage>
        <taxon>Bacteria</taxon>
        <taxon>Pseudomonadati</taxon>
        <taxon>Pseudomonadota</taxon>
        <taxon>Alphaproteobacteria</taxon>
        <taxon>Hyphomicrobiales</taxon>
        <taxon>Brucellaceae</taxon>
        <taxon>Brucella/Ochrobactrum group</taxon>
        <taxon>Brucella</taxon>
    </lineage>
</organism>
<evidence type="ECO:0000255" key="1">
    <source>
        <dbReference type="HAMAP-Rule" id="MF_01365"/>
    </source>
</evidence>
<evidence type="ECO:0000305" key="2"/>
<proteinExistence type="inferred from homology"/>
<feature type="chain" id="PRO_0000265227" description="Large ribosomal subunit protein uL6">
    <location>
        <begin position="1"/>
        <end position="177"/>
    </location>
</feature>
<protein>
    <recommendedName>
        <fullName evidence="1">Large ribosomal subunit protein uL6</fullName>
    </recommendedName>
    <alternativeName>
        <fullName evidence="2">50S ribosomal protein L6</fullName>
    </alternativeName>
</protein>
<comment type="function">
    <text evidence="1">This protein binds to the 23S rRNA, and is important in its secondary structure. It is located near the subunit interface in the base of the L7/L12 stalk, and near the tRNA binding site of the peptidyltransferase center.</text>
</comment>
<comment type="subunit">
    <text evidence="1">Part of the 50S ribosomal subunit.</text>
</comment>
<comment type="similarity">
    <text evidence="1">Belongs to the universal ribosomal protein uL6 family.</text>
</comment>
<keyword id="KW-1185">Reference proteome</keyword>
<keyword id="KW-0687">Ribonucleoprotein</keyword>
<keyword id="KW-0689">Ribosomal protein</keyword>
<keyword id="KW-0694">RNA-binding</keyword>
<keyword id="KW-0699">rRNA-binding</keyword>
<accession>Q2YRB0</accession>
<sequence>MSRIGKKPVPVPAGVTGSVEGQTVKAKGAKGELSFVVHDEVLVKMEDGAVRVDPRDQSKEARSKWGMSRTMISNIFVGVKDGFEKKLEISGVGYRAAMQGKNLQLSLGFSHEVVYDVPAGITVAVPKPTEIVVTGIDKQQVGQVAAEIREYRGPEPYKGKGVKYAGEKIVRKEGKKK</sequence>
<gene>
    <name evidence="1" type="primary">rplF</name>
    <name type="ordered locus">BAB1_1240</name>
</gene>
<reference key="1">
    <citation type="journal article" date="2005" name="Infect. Immun.">
        <title>Whole-genome analyses of speciation events in pathogenic Brucellae.</title>
        <authorList>
            <person name="Chain P.S."/>
            <person name="Comerci D.J."/>
            <person name="Tolmasky M.E."/>
            <person name="Larimer F.W."/>
            <person name="Malfatti S.A."/>
            <person name="Vergez L.M."/>
            <person name="Aguero F."/>
            <person name="Land M.L."/>
            <person name="Ugalde R.A."/>
            <person name="Garcia E."/>
        </authorList>
    </citation>
    <scope>NUCLEOTIDE SEQUENCE [LARGE SCALE GENOMIC DNA]</scope>
    <source>
        <strain>2308</strain>
    </source>
</reference>
<name>RL6_BRUA2</name>
<dbReference type="EMBL" id="AM040264">
    <property type="protein sequence ID" value="CAJ11196.1"/>
    <property type="molecule type" value="Genomic_DNA"/>
</dbReference>
<dbReference type="RefSeq" id="WP_002964347.1">
    <property type="nucleotide sequence ID" value="NZ_KN046823.1"/>
</dbReference>
<dbReference type="SMR" id="Q2YRB0"/>
<dbReference type="STRING" id="359391.BAB1_1240"/>
<dbReference type="GeneID" id="93016454"/>
<dbReference type="KEGG" id="bmf:BAB1_1240"/>
<dbReference type="PATRIC" id="fig|359391.11.peg.140"/>
<dbReference type="HOGENOM" id="CLU_065464_1_2_5"/>
<dbReference type="PhylomeDB" id="Q2YRB0"/>
<dbReference type="Proteomes" id="UP000002719">
    <property type="component" value="Chromosome I"/>
</dbReference>
<dbReference type="GO" id="GO:0022625">
    <property type="term" value="C:cytosolic large ribosomal subunit"/>
    <property type="evidence" value="ECO:0007669"/>
    <property type="project" value="TreeGrafter"/>
</dbReference>
<dbReference type="GO" id="GO:0019843">
    <property type="term" value="F:rRNA binding"/>
    <property type="evidence" value="ECO:0007669"/>
    <property type="project" value="UniProtKB-UniRule"/>
</dbReference>
<dbReference type="GO" id="GO:0003735">
    <property type="term" value="F:structural constituent of ribosome"/>
    <property type="evidence" value="ECO:0007669"/>
    <property type="project" value="InterPro"/>
</dbReference>
<dbReference type="GO" id="GO:0002181">
    <property type="term" value="P:cytoplasmic translation"/>
    <property type="evidence" value="ECO:0007669"/>
    <property type="project" value="TreeGrafter"/>
</dbReference>
<dbReference type="FunFam" id="3.90.930.12:FF:000001">
    <property type="entry name" value="50S ribosomal protein L6"/>
    <property type="match status" value="1"/>
</dbReference>
<dbReference type="Gene3D" id="3.90.930.12">
    <property type="entry name" value="Ribosomal protein L6, alpha-beta domain"/>
    <property type="match status" value="2"/>
</dbReference>
<dbReference type="HAMAP" id="MF_01365_B">
    <property type="entry name" value="Ribosomal_uL6_B"/>
    <property type="match status" value="1"/>
</dbReference>
<dbReference type="InterPro" id="IPR000702">
    <property type="entry name" value="Ribosomal_uL6-like"/>
</dbReference>
<dbReference type="InterPro" id="IPR036789">
    <property type="entry name" value="Ribosomal_uL6-like_a/b-dom_sf"/>
</dbReference>
<dbReference type="InterPro" id="IPR020040">
    <property type="entry name" value="Ribosomal_uL6_a/b-dom"/>
</dbReference>
<dbReference type="InterPro" id="IPR019906">
    <property type="entry name" value="Ribosomal_uL6_bac-type"/>
</dbReference>
<dbReference type="InterPro" id="IPR002358">
    <property type="entry name" value="Ribosomal_uL6_CS"/>
</dbReference>
<dbReference type="NCBIfam" id="TIGR03654">
    <property type="entry name" value="L6_bact"/>
    <property type="match status" value="1"/>
</dbReference>
<dbReference type="PANTHER" id="PTHR11655">
    <property type="entry name" value="60S/50S RIBOSOMAL PROTEIN L6/L9"/>
    <property type="match status" value="1"/>
</dbReference>
<dbReference type="PANTHER" id="PTHR11655:SF14">
    <property type="entry name" value="LARGE RIBOSOMAL SUBUNIT PROTEIN UL6M"/>
    <property type="match status" value="1"/>
</dbReference>
<dbReference type="Pfam" id="PF00347">
    <property type="entry name" value="Ribosomal_L6"/>
    <property type="match status" value="2"/>
</dbReference>
<dbReference type="PIRSF" id="PIRSF002162">
    <property type="entry name" value="Ribosomal_L6"/>
    <property type="match status" value="1"/>
</dbReference>
<dbReference type="PRINTS" id="PR00059">
    <property type="entry name" value="RIBOSOMALL6"/>
</dbReference>
<dbReference type="SUPFAM" id="SSF56053">
    <property type="entry name" value="Ribosomal protein L6"/>
    <property type="match status" value="2"/>
</dbReference>
<dbReference type="PROSITE" id="PS00525">
    <property type="entry name" value="RIBOSOMAL_L6_1"/>
    <property type="match status" value="1"/>
</dbReference>